<proteinExistence type="evidence at protein level"/>
<keyword id="KW-0040">ANK repeat</keyword>
<keyword id="KW-0051">Antiviral defense</keyword>
<keyword id="KW-0067">ATP-binding</keyword>
<keyword id="KW-0963">Cytoplasm</keyword>
<keyword id="KW-0255">Endonuclease</keyword>
<keyword id="KW-0378">Hydrolase</keyword>
<keyword id="KW-0479">Metal-binding</keyword>
<keyword id="KW-0496">Mitochondrion</keyword>
<keyword id="KW-0540">Nuclease</keyword>
<keyword id="KW-0547">Nucleotide-binding</keyword>
<keyword id="KW-1185">Reference proteome</keyword>
<keyword id="KW-0677">Repeat</keyword>
<keyword id="KW-0694">RNA-binding</keyword>
<keyword id="KW-0862">Zinc</keyword>
<keyword id="KW-0863">Zinc-finger</keyword>
<name>RN5A_MOUSE</name>
<protein>
    <recommendedName>
        <fullName>2-5A-dependent ribonuclease</fullName>
        <shortName>2-5A-dependent RNase</shortName>
        <ecNumber>3.1.26.-</ecNumber>
    </recommendedName>
    <alternativeName>
        <fullName>Ribonuclease 4</fullName>
    </alternativeName>
    <alternativeName>
        <fullName>Ribonuclease L</fullName>
        <shortName>RNase L</shortName>
    </alternativeName>
</protein>
<dbReference type="EC" id="3.1.26.-"/>
<dbReference type="EMBL" id="AF281045">
    <property type="protein sequence ID" value="AAG33708.1"/>
    <property type="molecule type" value="mRNA"/>
</dbReference>
<dbReference type="EMBL" id="L10382">
    <property type="protein sequence ID" value="AAA37117.1"/>
    <property type="molecule type" value="Genomic_DNA"/>
</dbReference>
<dbReference type="CCDS" id="CCDS15377.1"/>
<dbReference type="PIR" id="B45771">
    <property type="entry name" value="B45771"/>
</dbReference>
<dbReference type="RefSeq" id="NP_036012.1">
    <property type="nucleotide sequence ID" value="NM_011882.2"/>
</dbReference>
<dbReference type="RefSeq" id="XP_006529590.1">
    <property type="nucleotide sequence ID" value="XM_006529527.5"/>
</dbReference>
<dbReference type="RefSeq" id="XP_006529591.1">
    <property type="nucleotide sequence ID" value="XM_006529528.5"/>
</dbReference>
<dbReference type="RefSeq" id="XP_006529593.1">
    <property type="nucleotide sequence ID" value="XM_006529530.2"/>
</dbReference>
<dbReference type="RefSeq" id="XP_011246295.1">
    <property type="nucleotide sequence ID" value="XM_011247993.4"/>
</dbReference>
<dbReference type="RefSeq" id="XP_030109810.1">
    <property type="nucleotide sequence ID" value="XM_030253950.2"/>
</dbReference>
<dbReference type="RefSeq" id="XP_030109811.1">
    <property type="nucleotide sequence ID" value="XM_030253951.2"/>
</dbReference>
<dbReference type="RefSeq" id="XP_030109813.1">
    <property type="nucleotide sequence ID" value="XM_030253953.2"/>
</dbReference>
<dbReference type="RefSeq" id="XP_036020559.1">
    <property type="nucleotide sequence ID" value="XM_036164666.1"/>
</dbReference>
<dbReference type="RefSeq" id="XP_036020560.1">
    <property type="nucleotide sequence ID" value="XM_036164667.1"/>
</dbReference>
<dbReference type="SMR" id="Q05921"/>
<dbReference type="BioGRID" id="204854">
    <property type="interactions" value="8"/>
</dbReference>
<dbReference type="FunCoup" id="Q05921">
    <property type="interactions" value="687"/>
</dbReference>
<dbReference type="STRING" id="10090.ENSMUSP00000083385"/>
<dbReference type="BindingDB" id="Q05921"/>
<dbReference type="ChEMBL" id="CHEMBL2687"/>
<dbReference type="GlyGen" id="Q05921">
    <property type="glycosylation" value="1 site"/>
</dbReference>
<dbReference type="iPTMnet" id="Q05921"/>
<dbReference type="PhosphoSitePlus" id="Q05921"/>
<dbReference type="PaxDb" id="10090-ENSMUSP00000083385"/>
<dbReference type="ProteomicsDB" id="300452"/>
<dbReference type="Antibodypedia" id="1127">
    <property type="antibodies" value="229 antibodies from 29 providers"/>
</dbReference>
<dbReference type="DNASU" id="24014"/>
<dbReference type="Ensembl" id="ENSMUST00000086209.10">
    <property type="protein sequence ID" value="ENSMUSP00000083385.4"/>
    <property type="gene ID" value="ENSMUSG00000066800.12"/>
</dbReference>
<dbReference type="GeneID" id="24014"/>
<dbReference type="KEGG" id="mmu:24014"/>
<dbReference type="UCSC" id="uc007daf.1">
    <property type="organism name" value="mouse"/>
</dbReference>
<dbReference type="AGR" id="MGI:1098272"/>
<dbReference type="CTD" id="6041"/>
<dbReference type="MGI" id="MGI:1098272">
    <property type="gene designation" value="Rnasel"/>
</dbReference>
<dbReference type="VEuPathDB" id="HostDB:ENSMUSG00000066800"/>
<dbReference type="eggNOG" id="KOG1027">
    <property type="taxonomic scope" value="Eukaryota"/>
</dbReference>
<dbReference type="eggNOG" id="KOG4177">
    <property type="taxonomic scope" value="Eukaryota"/>
</dbReference>
<dbReference type="GeneTree" id="ENSGT00940000161114"/>
<dbReference type="InParanoid" id="Q05921"/>
<dbReference type="OMA" id="YGSESHK"/>
<dbReference type="OrthoDB" id="194358at2759"/>
<dbReference type="PhylomeDB" id="Q05921"/>
<dbReference type="TreeFam" id="TF344032"/>
<dbReference type="Reactome" id="R-MMU-8983711">
    <property type="pathway name" value="OAS antiviral response"/>
</dbReference>
<dbReference type="Reactome" id="R-MMU-909733">
    <property type="pathway name" value="Interferon alpha/beta signaling"/>
</dbReference>
<dbReference type="BioGRID-ORCS" id="24014">
    <property type="hits" value="3 hits in 78 CRISPR screens"/>
</dbReference>
<dbReference type="PRO" id="PR:Q05921"/>
<dbReference type="Proteomes" id="UP000000589">
    <property type="component" value="Chromosome 1"/>
</dbReference>
<dbReference type="RNAct" id="Q05921">
    <property type="molecule type" value="protein"/>
</dbReference>
<dbReference type="Bgee" id="ENSMUSG00000066800">
    <property type="expression patterns" value="Expressed in right colon and 212 other cell types or tissues"/>
</dbReference>
<dbReference type="ExpressionAtlas" id="Q05921">
    <property type="expression patterns" value="baseline and differential"/>
</dbReference>
<dbReference type="GO" id="GO:0005739">
    <property type="term" value="C:mitochondrion"/>
    <property type="evidence" value="ECO:0007669"/>
    <property type="project" value="UniProtKB-SubCell"/>
</dbReference>
<dbReference type="GO" id="GO:0005524">
    <property type="term" value="F:ATP binding"/>
    <property type="evidence" value="ECO:0007669"/>
    <property type="project" value="UniProtKB-KW"/>
</dbReference>
<dbReference type="GO" id="GO:0004519">
    <property type="term" value="F:endonuclease activity"/>
    <property type="evidence" value="ECO:0007669"/>
    <property type="project" value="UniProtKB-KW"/>
</dbReference>
<dbReference type="GO" id="GO:0004672">
    <property type="term" value="F:protein kinase activity"/>
    <property type="evidence" value="ECO:0007669"/>
    <property type="project" value="InterPro"/>
</dbReference>
<dbReference type="GO" id="GO:0043021">
    <property type="term" value="F:ribonucleoprotein complex binding"/>
    <property type="evidence" value="ECO:0000314"/>
    <property type="project" value="MGI"/>
</dbReference>
<dbReference type="GO" id="GO:0003723">
    <property type="term" value="F:RNA binding"/>
    <property type="evidence" value="ECO:0007669"/>
    <property type="project" value="UniProtKB-KW"/>
</dbReference>
<dbReference type="GO" id="GO:0004540">
    <property type="term" value="F:RNA nuclease activity"/>
    <property type="evidence" value="ECO:0007669"/>
    <property type="project" value="Ensembl"/>
</dbReference>
<dbReference type="GO" id="GO:0008270">
    <property type="term" value="F:zinc ion binding"/>
    <property type="evidence" value="ECO:0007669"/>
    <property type="project" value="UniProtKB-KW"/>
</dbReference>
<dbReference type="GO" id="GO:0051607">
    <property type="term" value="P:defense response to virus"/>
    <property type="evidence" value="ECO:0007669"/>
    <property type="project" value="UniProtKB-KW"/>
</dbReference>
<dbReference type="GO" id="GO:0045444">
    <property type="term" value="P:fat cell differentiation"/>
    <property type="evidence" value="ECO:0000315"/>
    <property type="project" value="MGI"/>
</dbReference>
<dbReference type="GO" id="GO:0006397">
    <property type="term" value="P:mRNA processing"/>
    <property type="evidence" value="ECO:0007669"/>
    <property type="project" value="InterPro"/>
</dbReference>
<dbReference type="GO" id="GO:0045071">
    <property type="term" value="P:negative regulation of viral genome replication"/>
    <property type="evidence" value="ECO:0007669"/>
    <property type="project" value="Ensembl"/>
</dbReference>
<dbReference type="GO" id="GO:0046326">
    <property type="term" value="P:positive regulation of D-glucose import"/>
    <property type="evidence" value="ECO:0000315"/>
    <property type="project" value="MGI"/>
</dbReference>
<dbReference type="GO" id="GO:0045944">
    <property type="term" value="P:positive regulation of transcription by RNA polymerase II"/>
    <property type="evidence" value="ECO:0007669"/>
    <property type="project" value="Ensembl"/>
</dbReference>
<dbReference type="GO" id="GO:0043488">
    <property type="term" value="P:regulation of mRNA stability"/>
    <property type="evidence" value="ECO:0000315"/>
    <property type="project" value="MGI"/>
</dbReference>
<dbReference type="CDD" id="cd10423">
    <property type="entry name" value="RNase_RNase-L"/>
    <property type="match status" value="1"/>
</dbReference>
<dbReference type="FunFam" id="1.25.40.20:FF:000231">
    <property type="entry name" value="2-5A-dependent ribonuclease"/>
    <property type="match status" value="1"/>
</dbReference>
<dbReference type="FunFam" id="1.10.510.10:FF:000618">
    <property type="entry name" value="Ribonuclease L"/>
    <property type="match status" value="1"/>
</dbReference>
<dbReference type="FunFam" id="1.20.1440.180:FF:000003">
    <property type="entry name" value="Ribonuclease L"/>
    <property type="match status" value="1"/>
</dbReference>
<dbReference type="Gene3D" id="1.25.40.20">
    <property type="entry name" value="Ankyrin repeat-containing domain"/>
    <property type="match status" value="1"/>
</dbReference>
<dbReference type="Gene3D" id="1.20.1440.180">
    <property type="entry name" value="KEN domain"/>
    <property type="match status" value="1"/>
</dbReference>
<dbReference type="Gene3D" id="1.10.510.10">
    <property type="entry name" value="Transferase(Phosphotransferase) domain 1"/>
    <property type="match status" value="1"/>
</dbReference>
<dbReference type="InterPro" id="IPR002110">
    <property type="entry name" value="Ankyrin_rpt"/>
</dbReference>
<dbReference type="InterPro" id="IPR036770">
    <property type="entry name" value="Ankyrin_rpt-contain_sf"/>
</dbReference>
<dbReference type="InterPro" id="IPR010513">
    <property type="entry name" value="KEN_dom"/>
</dbReference>
<dbReference type="InterPro" id="IPR038357">
    <property type="entry name" value="KEN_sf"/>
</dbReference>
<dbReference type="InterPro" id="IPR011009">
    <property type="entry name" value="Kinase-like_dom_sf"/>
</dbReference>
<dbReference type="InterPro" id="IPR000719">
    <property type="entry name" value="Prot_kinase_dom"/>
</dbReference>
<dbReference type="InterPro" id="IPR042745">
    <property type="entry name" value="RNase-L_RNase"/>
</dbReference>
<dbReference type="PANTHER" id="PTHR24141">
    <property type="entry name" value="2-5A-DEPENDENT RIBONUCLEASE"/>
    <property type="match status" value="1"/>
</dbReference>
<dbReference type="PANTHER" id="PTHR24141:SF1">
    <property type="entry name" value="2-5A-DEPENDENT RIBONUCLEASE"/>
    <property type="match status" value="1"/>
</dbReference>
<dbReference type="Pfam" id="PF00023">
    <property type="entry name" value="Ank"/>
    <property type="match status" value="1"/>
</dbReference>
<dbReference type="Pfam" id="PF12796">
    <property type="entry name" value="Ank_2"/>
    <property type="match status" value="2"/>
</dbReference>
<dbReference type="Pfam" id="PF13637">
    <property type="entry name" value="Ank_4"/>
    <property type="match status" value="1"/>
</dbReference>
<dbReference type="Pfam" id="PF00069">
    <property type="entry name" value="Pkinase"/>
    <property type="match status" value="1"/>
</dbReference>
<dbReference type="Pfam" id="PF06479">
    <property type="entry name" value="Ribonuc_2-5A"/>
    <property type="match status" value="1"/>
</dbReference>
<dbReference type="PRINTS" id="PR01415">
    <property type="entry name" value="ANKYRIN"/>
</dbReference>
<dbReference type="SMART" id="SM00248">
    <property type="entry name" value="ANK"/>
    <property type="match status" value="8"/>
</dbReference>
<dbReference type="SMART" id="SM00580">
    <property type="entry name" value="PUG"/>
    <property type="match status" value="1"/>
</dbReference>
<dbReference type="SUPFAM" id="SSF48403">
    <property type="entry name" value="Ankyrin repeat"/>
    <property type="match status" value="1"/>
</dbReference>
<dbReference type="SUPFAM" id="SSF56112">
    <property type="entry name" value="Protein kinase-like (PK-like)"/>
    <property type="match status" value="1"/>
</dbReference>
<dbReference type="PROSITE" id="PS50297">
    <property type="entry name" value="ANK_REP_REGION"/>
    <property type="match status" value="1"/>
</dbReference>
<dbReference type="PROSITE" id="PS50088">
    <property type="entry name" value="ANK_REPEAT"/>
    <property type="match status" value="7"/>
</dbReference>
<dbReference type="PROSITE" id="PS51392">
    <property type="entry name" value="KEN"/>
    <property type="match status" value="1"/>
</dbReference>
<dbReference type="PROSITE" id="PS50011">
    <property type="entry name" value="PROTEIN_KINASE_DOM"/>
    <property type="match status" value="1"/>
</dbReference>
<gene>
    <name type="primary">Rnasel</name>
    <name type="synonym">Rns4</name>
</gene>
<organism>
    <name type="scientific">Mus musculus</name>
    <name type="common">Mouse</name>
    <dbReference type="NCBI Taxonomy" id="10090"/>
    <lineage>
        <taxon>Eukaryota</taxon>
        <taxon>Metazoa</taxon>
        <taxon>Chordata</taxon>
        <taxon>Craniata</taxon>
        <taxon>Vertebrata</taxon>
        <taxon>Euteleostomi</taxon>
        <taxon>Mammalia</taxon>
        <taxon>Eutheria</taxon>
        <taxon>Euarchontoglires</taxon>
        <taxon>Glires</taxon>
        <taxon>Rodentia</taxon>
        <taxon>Myomorpha</taxon>
        <taxon>Muroidea</taxon>
        <taxon>Muridae</taxon>
        <taxon>Murinae</taxon>
        <taxon>Mus</taxon>
        <taxon>Mus</taxon>
    </lineage>
</organism>
<reference key="1">
    <citation type="journal article" date="2000" name="Mamm. Genome">
        <title>Analysis and origins of the human and mouse RNase L genes: mediators of interferon action.</title>
        <authorList>
            <person name="Zhou A."/>
            <person name="Nie H."/>
            <person name="Silverman R.H."/>
        </authorList>
    </citation>
    <scope>NUCLEOTIDE SEQUENCE [MRNA]</scope>
    <source>
        <strain>C3H/An</strain>
        <tissue>Adipose tissue</tissue>
    </source>
</reference>
<reference key="2">
    <citation type="journal article" date="1993" name="Cell">
        <title>Expression cloning of 2-5A-dependent RNAase: a uniquely regulated mediator of interferon action.</title>
        <authorList>
            <person name="Zhou A."/>
            <person name="Hassel B.A."/>
            <person name="Silverman R.H."/>
        </authorList>
    </citation>
    <scope>NUCLEOTIDE SEQUENCE [GENOMIC DNA] OF 1-679</scope>
</reference>
<reference key="3">
    <citation type="journal article" date="2001" name="J. Biol. Chem.">
        <title>The 2-5A/RNase L/RNase L inhibitor (RNI) pathway regulates mitochondrial mRNAs stability in interferon alpha-treated H9 cells.</title>
        <authorList>
            <person name="Le Roy F."/>
            <person name="Bisbal C."/>
            <person name="Silhol M."/>
            <person name="Martinand C."/>
            <person name="Lebleu B."/>
            <person name="Salehzada T."/>
        </authorList>
    </citation>
    <scope>FUNCTION</scope>
    <scope>SUBCELLULAR LOCATION</scope>
</reference>
<reference key="4">
    <citation type="journal article" date="2002" name="J. Biol. Chem.">
        <authorList>
            <person name="Le Roy F."/>
            <person name="Bisbal C."/>
            <person name="Silhol M."/>
            <person name="Martinand C."/>
            <person name="Lebleu B."/>
            <person name="Salehzada T."/>
        </authorList>
    </citation>
    <scope>ERRATUM OF PUBMED:11585831</scope>
</reference>
<reference key="5">
    <citation type="journal article" date="2010" name="Cell">
        <title>A tissue-specific atlas of mouse protein phosphorylation and expression.</title>
        <authorList>
            <person name="Huttlin E.L."/>
            <person name="Jedrychowski M.P."/>
            <person name="Elias J.E."/>
            <person name="Goswami T."/>
            <person name="Rad R."/>
            <person name="Beausoleil S.A."/>
            <person name="Villen J."/>
            <person name="Haas W."/>
            <person name="Sowa M.E."/>
            <person name="Gygi S.P."/>
        </authorList>
    </citation>
    <scope>IDENTIFICATION BY MASS SPECTROMETRY [LARGE SCALE ANALYSIS]</scope>
    <source>
        <tissue>Spleen</tissue>
    </source>
</reference>
<reference key="6">
    <citation type="journal article" date="2013" name="PLoS Pathog.">
        <title>Evasion of Antiviral Innate Immunity by Theiler's Virus L* Protein through Direct Inhibition of RNase L.</title>
        <authorList>
            <person name="Sorgeloos F."/>
            <person name="Jha B.K."/>
            <person name="Silverman R.H."/>
            <person name="Michiels T."/>
        </authorList>
    </citation>
    <scope>INTERACTION WITH TMEV LEADER PROTEIN (MICROBIAL INFECTION)</scope>
</reference>
<reference key="7">
    <citation type="journal article" date="2018" name="PLoS Pathog.">
        <title>A novel mechanism of RNase L inhibition: Theiler's virus L* protein prevents 2-5A from binding to RNase L.</title>
        <authorList>
            <person name="Drappier M."/>
            <person name="Jha B.K."/>
            <person name="Stone S."/>
            <person name="Elliott R."/>
            <person name="Zhang R."/>
            <person name="Vertommen D."/>
            <person name="Weiss S.R."/>
            <person name="Silverman R.H."/>
            <person name="Michiels T."/>
        </authorList>
    </citation>
    <scope>INTERACTION WITH TMEV LEADER PROTEIN (MICROBIAL INFECTION)</scope>
</reference>
<feature type="chain" id="PRO_0000067052" description="2-5A-dependent ribonuclease">
    <location>
        <begin position="1"/>
        <end position="735"/>
    </location>
</feature>
<feature type="repeat" description="ANK 1">
    <location>
        <begin position="24"/>
        <end position="53"/>
    </location>
</feature>
<feature type="repeat" description="ANK 2">
    <location>
        <begin position="58"/>
        <end position="87"/>
    </location>
</feature>
<feature type="repeat" description="ANK 3">
    <location>
        <begin position="91"/>
        <end position="120"/>
    </location>
</feature>
<feature type="repeat" description="ANK 4">
    <location>
        <begin position="124"/>
        <end position="153"/>
    </location>
</feature>
<feature type="repeat" description="ANK 5">
    <location>
        <begin position="167"/>
        <end position="197"/>
    </location>
</feature>
<feature type="repeat" description="ANK 6">
    <location>
        <begin position="201"/>
        <end position="234"/>
    </location>
</feature>
<feature type="repeat" description="ANK 7">
    <location>
        <begin position="238"/>
        <end position="268"/>
    </location>
</feature>
<feature type="repeat" description="ANK 8">
    <location>
        <begin position="272"/>
        <end position="301"/>
    </location>
</feature>
<feature type="repeat" description="ANK 9">
    <location>
        <begin position="303"/>
        <end position="328"/>
    </location>
</feature>
<feature type="domain" description="Protein kinase" evidence="4">
    <location>
        <begin position="364"/>
        <end position="584"/>
    </location>
</feature>
<feature type="domain" description="KEN" evidence="5">
    <location>
        <begin position="587"/>
        <end position="722"/>
    </location>
</feature>
<feature type="zinc finger region" description="C6-type" evidence="3">
    <location>
        <begin position="401"/>
        <end position="436"/>
    </location>
</feature>
<feature type="region of interest" description="Disordered" evidence="6">
    <location>
        <begin position="1"/>
        <end position="21"/>
    </location>
</feature>
<feature type="region of interest" description="Binding to TMEV Leader protein" evidence="9">
    <location>
        <begin position="26"/>
        <end position="51"/>
    </location>
</feature>
<feature type="region of interest" description="2-5A binding (P-loop) 1">
    <location>
        <begin position="229"/>
        <end position="242"/>
    </location>
</feature>
<feature type="region of interest" description="2-5A binding (P-loop) 2">
    <location>
        <begin position="253"/>
        <end position="275"/>
    </location>
</feature>
<feature type="region of interest" description="Disordered" evidence="6">
    <location>
        <begin position="714"/>
        <end position="735"/>
    </location>
</feature>
<comment type="function">
    <text evidence="2 7">Endoribonuclease that functions in the interferon (IFN) antiviral response. In INF treated and virus infected cells, RNASEL probably mediates its antiviral effects through a combination of direct cleavage of single-stranded viral RNAs, inhibition of protein synthesis through the degradation of rRNA, induction of apoptosis, and induction of other antiviral genes. RNASEL mediated apoptosis is the result of a JNK-dependent stress-response pathway leading to cytochrome c release from mitochondria and caspase-dependent apoptosis. Therefore, activation of RNASEL could lead to elimination of virus infected cells under some circumstances. In the crosstalk between autophagy and apoptosis proposed to induce autophagy as an early stress response to small double-stranded RNA and at later stages of prolonged stress to activate caspase-dependent proteolytic cleavage of BECN1 to terminate autophagy and promote apoptosis. Might play a central role in the regulation of mRNA turnover (By similarity). Cleaves 3' of UpNp dimers, with preference for UU and UA sequences, to sets of discrete products ranging from between 4 and 22 nucleotides in length (By similarity).</text>
</comment>
<comment type="cofactor">
    <cofactor>
        <name>Mn(2+)</name>
        <dbReference type="ChEBI" id="CHEBI:29035"/>
    </cofactor>
    <cofactor>
        <name>Mg(2+)</name>
        <dbReference type="ChEBI" id="CHEBI:18420"/>
    </cofactor>
    <text>Manganese or magnesium. Required for optimal RNA cleavage rates.</text>
</comment>
<comment type="activity regulation">
    <text evidence="1">After binding to 2-5A (5'-phosphorylated 2',5'-linked oligoadenylates) the homodimerization and subsequent activation occurs. Inhibited by RNASEL inhibitor ABCE1/RLI, a cytoplasmic member of the ATP-binding cassette (ABC) transporter family (By similarity).</text>
</comment>
<comment type="subunit">
    <text evidence="8 9">(Microbial infection) Interacts (via N-terminus) with TMEV leader protein; this interaction prevents RNASEL activation by its substrate 2'-5' oligoadenylates.</text>
</comment>
<comment type="subunit">
    <text evidence="1">Monomer (inactive form) or homodimer. Interacts with ABCE1; this interaction inhibits the RNASEL (By similarity).</text>
</comment>
<comment type="subcellular location">
    <subcellularLocation>
        <location evidence="7">Cytoplasm</location>
    </subcellularLocation>
    <subcellularLocation>
        <location evidence="7">Mitochondrion</location>
    </subcellularLocation>
</comment>
<comment type="tissue specificity">
    <text>Expressed in spleen, thymus, lung, testis, kidney, liver and heart.</text>
</comment>
<comment type="induction">
    <text>By interferons. Virus replication in higher vertebrates is restrained by IFNs that cause cells to transcribe genes encoding antiviral proteins, such as 2'-5' oligoadenylate synthetases (OASs). oligoadenylate synthetase is stimulated by dsRNA to produce 5'-phosphorylated, 2'-5'-linked oligoadenylates (2-5A), whose function is to activate RNASEL.</text>
</comment>
<comment type="domain">
    <text>The nine ankyrin repeats also called 2-5A sensor constitute the N-terminus 2-5A binding domain.</text>
</comment>
<comment type="domain">
    <text>The protein kinase domain is predicted to be catalytically inactive. It allows the homodimerization.</text>
</comment>
<comment type="domain">
    <text>The ribonuclease domain is located in the C-terminus. A single active nuclease domain in a dimer is sufficient for ribonuclease activity.</text>
</comment>
<comment type="similarity">
    <text evidence="10">Belongs to the protein kinase superfamily.</text>
</comment>
<sequence length="735" mass="83275">METPDYNTPQGGTPSAGSQRTVVEDDSSLIKAVQKGDVVRVQQLLEKGADANACEDTWGWTPLHNAVQAGRVDIVNLLLSHGADPHRRKKNGATPFIIAGIQGDVKLLEILLSCGADVNECDENGFTAFMEAAERGNAEALRFLFAKGANVNLRRQTTKDKRRLKQGGATALMSAAEKGHLEVLRILLNDMKAEVDARDNMGRNALIRTLLNWDCENVEEITSILIQHGADVNVRGERGKTPLIAAVERKHTGLVQMLLSREGINIDARDNEGKTALLIAVDKQLKEIVQLLLEKGADKCDDLVWIARRNHDYHLVKLLLPYVANPDTDPPAGDWSPHSSRWGTALKSLHSMTRPMIGKLKIFIHDDYKIAGTSEGAVYLGIYDNREVAVKVFRENSPRGCKEVSCLRDCGDHSNLVAFYGREDDKGCLYVCVSLCEWTLEEFLRLPREEPVENGEDKFAHSILLSIFEGVQKLHLHGYSHQDLQPQNILIDSKKAVRLADFDQSIRWMGESQMVRRDLEDLGRLVLYVVMKGEIPFETLKTQNDEVLLTMSPDEETKDLIHCLFSPGENVKNCLVDLLGHPFFWTWENRYRTLRNVGNESDIKVRKCKSDLLRLLQHQTLEPPRSFDQWTSKIDKNVMDEMNHFYEKRKKNPYQDTVGDLLKFIRNIGEHINEEKKRGMKEILGDPSRYFQETFPDLVIYIYKKLKETEYRKHFPQPPPRLSVPEAVGPGGIQS</sequence>
<evidence type="ECO:0000250" key="1"/>
<evidence type="ECO:0000250" key="2">
    <source>
        <dbReference type="UniProtKB" id="Q05823"/>
    </source>
</evidence>
<evidence type="ECO:0000255" key="3"/>
<evidence type="ECO:0000255" key="4">
    <source>
        <dbReference type="PROSITE-ProRule" id="PRU00159"/>
    </source>
</evidence>
<evidence type="ECO:0000255" key="5">
    <source>
        <dbReference type="PROSITE-ProRule" id="PRU00725"/>
    </source>
</evidence>
<evidence type="ECO:0000256" key="6">
    <source>
        <dbReference type="SAM" id="MobiDB-lite"/>
    </source>
</evidence>
<evidence type="ECO:0000269" key="7">
    <source>
    </source>
</evidence>
<evidence type="ECO:0000269" key="8">
    <source>
    </source>
</evidence>
<evidence type="ECO:0000269" key="9">
    <source>
    </source>
</evidence>
<evidence type="ECO:0000305" key="10"/>
<accession>Q05921</accession>
<accession>Q9ERU7</accession>